<evidence type="ECO:0000250" key="1">
    <source>
        <dbReference type="UniProtKB" id="P41912"/>
    </source>
</evidence>
<evidence type="ECO:0000305" key="2"/>
<accession>Q758G1</accession>
<dbReference type="EMBL" id="AE016818">
    <property type="protein sequence ID" value="AAS52486.2"/>
    <property type="molecule type" value="Genomic_DNA"/>
</dbReference>
<dbReference type="RefSeq" id="NP_984662.2">
    <property type="nucleotide sequence ID" value="NM_210015.2"/>
</dbReference>
<dbReference type="SMR" id="Q758G1"/>
<dbReference type="FunCoup" id="Q758G1">
    <property type="interactions" value="56"/>
</dbReference>
<dbReference type="STRING" id="284811.Q758G1"/>
<dbReference type="EnsemblFungi" id="AAS52486">
    <property type="protein sequence ID" value="AAS52486"/>
    <property type="gene ID" value="AGOS_AEL199W"/>
</dbReference>
<dbReference type="GeneID" id="4620844"/>
<dbReference type="KEGG" id="ago:AGOS_AEL199W"/>
<dbReference type="eggNOG" id="ENOG502S30T">
    <property type="taxonomic scope" value="Eukaryota"/>
</dbReference>
<dbReference type="HOGENOM" id="CLU_087349_0_0_1"/>
<dbReference type="InParanoid" id="Q758G1"/>
<dbReference type="OMA" id="CITHFPN"/>
<dbReference type="OrthoDB" id="5377273at2759"/>
<dbReference type="Proteomes" id="UP000000591">
    <property type="component" value="Chromosome V"/>
</dbReference>
<dbReference type="GO" id="GO:0005789">
    <property type="term" value="C:endoplasmic reticulum membrane"/>
    <property type="evidence" value="ECO:0007669"/>
    <property type="project" value="UniProtKB-SubCell"/>
</dbReference>
<dbReference type="GO" id="GO:0031211">
    <property type="term" value="C:endoplasmic reticulum palmitoyltransferase complex"/>
    <property type="evidence" value="ECO:0000318"/>
    <property type="project" value="GO_Central"/>
</dbReference>
<dbReference type="GO" id="GO:0016409">
    <property type="term" value="F:palmitoyltransferase activity"/>
    <property type="evidence" value="ECO:0007669"/>
    <property type="project" value="EnsemblFungi"/>
</dbReference>
<dbReference type="GO" id="GO:0006612">
    <property type="term" value="P:protein targeting to membrane"/>
    <property type="evidence" value="ECO:0000318"/>
    <property type="project" value="GO_Central"/>
</dbReference>
<dbReference type="InterPro" id="IPR019383">
    <property type="entry name" value="Golgin_A_7/ERF4"/>
</dbReference>
<dbReference type="InterPro" id="IPR051371">
    <property type="entry name" value="Ras_palmitoyltransferase"/>
</dbReference>
<dbReference type="PANTHER" id="PTHR13254">
    <property type="entry name" value="GOLGI AUTOANTIGEN, GOLGIN SUBFAMILY A, 7"/>
    <property type="match status" value="1"/>
</dbReference>
<dbReference type="PANTHER" id="PTHR13254:SF0">
    <property type="entry name" value="GOLGIN SUBFAMILY A MEMBER 7_ERF4 DOMAIN-CONTAINING PROTEIN"/>
    <property type="match status" value="1"/>
</dbReference>
<dbReference type="Pfam" id="PF10256">
    <property type="entry name" value="Erf4"/>
    <property type="match status" value="1"/>
</dbReference>
<organism>
    <name type="scientific">Eremothecium gossypii (strain ATCC 10895 / CBS 109.51 / FGSC 9923 / NRRL Y-1056)</name>
    <name type="common">Yeast</name>
    <name type="synonym">Ashbya gossypii</name>
    <dbReference type="NCBI Taxonomy" id="284811"/>
    <lineage>
        <taxon>Eukaryota</taxon>
        <taxon>Fungi</taxon>
        <taxon>Dikarya</taxon>
        <taxon>Ascomycota</taxon>
        <taxon>Saccharomycotina</taxon>
        <taxon>Saccharomycetes</taxon>
        <taxon>Saccharomycetales</taxon>
        <taxon>Saccharomycetaceae</taxon>
        <taxon>Eremothecium</taxon>
    </lineage>
</organism>
<reference key="1">
    <citation type="journal article" date="2004" name="Science">
        <title>The Ashbya gossypii genome as a tool for mapping the ancient Saccharomyces cerevisiae genome.</title>
        <authorList>
            <person name="Dietrich F.S."/>
            <person name="Voegeli S."/>
            <person name="Brachat S."/>
            <person name="Lerch A."/>
            <person name="Gates K."/>
            <person name="Steiner S."/>
            <person name="Mohr C."/>
            <person name="Poehlmann R."/>
            <person name="Luedi P."/>
            <person name="Choi S."/>
            <person name="Wing R.A."/>
            <person name="Flavier A."/>
            <person name="Gaffney T.D."/>
            <person name="Philippsen P."/>
        </authorList>
    </citation>
    <scope>NUCLEOTIDE SEQUENCE [LARGE SCALE GENOMIC DNA]</scope>
    <source>
        <strain>ATCC 10895 / CBS 109.51 / FGSC 9923 / NRRL Y-1056</strain>
    </source>
</reference>
<reference key="2">
    <citation type="journal article" date="2013" name="G3 (Bethesda)">
        <title>Genomes of Ashbya fungi isolated from insects reveal four mating-type loci, numerous translocations, lack of transposons, and distinct gene duplications.</title>
        <authorList>
            <person name="Dietrich F.S."/>
            <person name="Voegeli S."/>
            <person name="Kuo S."/>
            <person name="Philippsen P."/>
        </authorList>
    </citation>
    <scope>GENOME REANNOTATION</scope>
    <scope>SEQUENCE REVISION TO C-TERMINUS</scope>
    <source>
        <strain>ATCC 10895 / CBS 109.51 / FGSC 9923 / NRRL Y-1056</strain>
    </source>
</reference>
<feature type="chain" id="PRO_0000213981" description="Ras modification protein ERF4">
    <location>
        <begin position="1"/>
        <end position="237"/>
    </location>
</feature>
<comment type="function">
    <text evidence="1">The ERF2-ERF4 complex is a palmitoyltransferase specific for Ras proteins. Palmitoylates RAS2, which is required for its proper plasma membrane localization (By similarity).</text>
</comment>
<comment type="subunit">
    <text evidence="1">Interacts with ERF2.</text>
</comment>
<comment type="subcellular location">
    <subcellularLocation>
        <location evidence="1">Endoplasmic reticulum membrane</location>
        <topology evidence="1">Peripheral membrane protein</topology>
    </subcellularLocation>
</comment>
<comment type="similarity">
    <text evidence="2">Belongs to the ERF4 family.</text>
</comment>
<name>ERFD_EREGS</name>
<sequence>MPKSEATEATGSKSGPDLLEGGNNPLFFNCHEFLVTKYRELGEEVVREHTEDEALCITHFPNIYCPQGSVEFDRTRIVRLPRRFEESMHYPSFSTELPGHEPAALQREDEARFTPAGFHDGHVFGRSSLSPLSNYVSPEECRDVVRAINGYLKEAYRVQGTQNILFNALDVLTFYTVSLLLSYFRRRTQLEQLEDYVEEVNERFFEKRGIRIISPRRSAYLSLDIQIPRPVPPAARS</sequence>
<gene>
    <name type="primary">ERF4</name>
    <name type="ordered locus">AEL199W</name>
</gene>
<protein>
    <recommendedName>
        <fullName>Ras modification protein ERF4</fullName>
    </recommendedName>
</protein>
<keyword id="KW-0256">Endoplasmic reticulum</keyword>
<keyword id="KW-0472">Membrane</keyword>
<keyword id="KW-1185">Reference proteome</keyword>
<proteinExistence type="inferred from homology"/>